<proteinExistence type="inferred from homology"/>
<feature type="chain" id="PRO_0000237520" description="DNA-directed RNA polymerase subunit omega">
    <location>
        <begin position="1"/>
        <end position="76"/>
    </location>
</feature>
<gene>
    <name evidence="1" type="primary">rpoZ</name>
    <name type="ordered locus">syc2381_c</name>
</gene>
<sequence length="76" mass="8778">MLQRFDLDSQDLLFKAESLIVNSTNRYHVTLQIARRAKQARYEEMENLSEETGIKPVLRAILEMSDELNQPEIIGG</sequence>
<comment type="function">
    <text evidence="1">Promotes RNA polymerase assembly. Latches the N- and C-terminal regions of the beta' subunit thereby facilitating its interaction with the beta and alpha subunits.</text>
</comment>
<comment type="catalytic activity">
    <reaction evidence="1">
        <text>RNA(n) + a ribonucleoside 5'-triphosphate = RNA(n+1) + diphosphate</text>
        <dbReference type="Rhea" id="RHEA:21248"/>
        <dbReference type="Rhea" id="RHEA-COMP:14527"/>
        <dbReference type="Rhea" id="RHEA-COMP:17342"/>
        <dbReference type="ChEBI" id="CHEBI:33019"/>
        <dbReference type="ChEBI" id="CHEBI:61557"/>
        <dbReference type="ChEBI" id="CHEBI:140395"/>
        <dbReference type="EC" id="2.7.7.6"/>
    </reaction>
</comment>
<comment type="subunit">
    <text evidence="1">In cyanobacteria the RNAP catalytic core is composed of 2 alpha, 1 beta, 1 beta', 1 gamma and 1 omega subunit. When a sigma factor is associated with the core the holoenzyme is formed, which can initiate transcription.</text>
</comment>
<comment type="similarity">
    <text evidence="1">Belongs to the RNA polymerase subunit omega family.</text>
</comment>
<protein>
    <recommendedName>
        <fullName evidence="1">DNA-directed RNA polymerase subunit omega</fullName>
        <shortName evidence="1">RNAP omega subunit</shortName>
        <ecNumber evidence="1">2.7.7.6</ecNumber>
    </recommendedName>
    <alternativeName>
        <fullName evidence="1">RNA polymerase omega subunit</fullName>
    </alternativeName>
    <alternativeName>
        <fullName evidence="1">Transcriptase subunit omega</fullName>
    </alternativeName>
</protein>
<name>RPOZ_SYNP6</name>
<reference key="1">
    <citation type="journal article" date="2007" name="Photosyn. Res.">
        <title>Complete nucleotide sequence of the freshwater unicellular cyanobacterium Synechococcus elongatus PCC 6301 chromosome: gene content and organization.</title>
        <authorList>
            <person name="Sugita C."/>
            <person name="Ogata K."/>
            <person name="Shikata M."/>
            <person name="Jikuya H."/>
            <person name="Takano J."/>
            <person name="Furumichi M."/>
            <person name="Kanehisa M."/>
            <person name="Omata T."/>
            <person name="Sugiura M."/>
            <person name="Sugita M."/>
        </authorList>
    </citation>
    <scope>NUCLEOTIDE SEQUENCE [LARGE SCALE GENOMIC DNA]</scope>
    <source>
        <strain>ATCC 27144 / PCC 6301 / SAUG 1402/1</strain>
    </source>
</reference>
<dbReference type="EC" id="2.7.7.6" evidence="1"/>
<dbReference type="EMBL" id="AP008231">
    <property type="protein sequence ID" value="BAD80571.1"/>
    <property type="molecule type" value="Genomic_DNA"/>
</dbReference>
<dbReference type="RefSeq" id="WP_011244691.1">
    <property type="nucleotide sequence ID" value="NZ_CP085785.1"/>
</dbReference>
<dbReference type="SMR" id="Q5MZE9"/>
<dbReference type="KEGG" id="syc:syc2381_c"/>
<dbReference type="eggNOG" id="ENOG5032RMS">
    <property type="taxonomic scope" value="Bacteria"/>
</dbReference>
<dbReference type="Proteomes" id="UP000001175">
    <property type="component" value="Chromosome"/>
</dbReference>
<dbReference type="GO" id="GO:0000428">
    <property type="term" value="C:DNA-directed RNA polymerase complex"/>
    <property type="evidence" value="ECO:0007669"/>
    <property type="project" value="UniProtKB-KW"/>
</dbReference>
<dbReference type="GO" id="GO:0003677">
    <property type="term" value="F:DNA binding"/>
    <property type="evidence" value="ECO:0007669"/>
    <property type="project" value="UniProtKB-UniRule"/>
</dbReference>
<dbReference type="GO" id="GO:0003899">
    <property type="term" value="F:DNA-directed RNA polymerase activity"/>
    <property type="evidence" value="ECO:0007669"/>
    <property type="project" value="UniProtKB-UniRule"/>
</dbReference>
<dbReference type="GO" id="GO:0006351">
    <property type="term" value="P:DNA-templated transcription"/>
    <property type="evidence" value="ECO:0007669"/>
    <property type="project" value="UniProtKB-UniRule"/>
</dbReference>
<dbReference type="HAMAP" id="MF_00366">
    <property type="entry name" value="RNApol_bact_RpoZ"/>
    <property type="match status" value="1"/>
</dbReference>
<dbReference type="InterPro" id="IPR003716">
    <property type="entry name" value="DNA-dir_RNA_pol_omega"/>
</dbReference>
<dbReference type="InterPro" id="IPR006110">
    <property type="entry name" value="Pol_omega/Rpo6/RPB6"/>
</dbReference>
<dbReference type="InterPro" id="IPR036161">
    <property type="entry name" value="RPB6/omega-like_sf"/>
</dbReference>
<dbReference type="NCBIfam" id="NF001574">
    <property type="entry name" value="PRK00392.2-5"/>
    <property type="match status" value="1"/>
</dbReference>
<dbReference type="Pfam" id="PF01192">
    <property type="entry name" value="RNA_pol_Rpb6"/>
    <property type="match status" value="1"/>
</dbReference>
<dbReference type="SUPFAM" id="SSF63562">
    <property type="entry name" value="RPB6/omega subunit-like"/>
    <property type="match status" value="1"/>
</dbReference>
<accession>Q5MZE9</accession>
<evidence type="ECO:0000255" key="1">
    <source>
        <dbReference type="HAMAP-Rule" id="MF_00366"/>
    </source>
</evidence>
<organism>
    <name type="scientific">Synechococcus sp. (strain ATCC 27144 / PCC 6301 / SAUG 1402/1)</name>
    <name type="common">Anacystis nidulans</name>
    <dbReference type="NCBI Taxonomy" id="269084"/>
    <lineage>
        <taxon>Bacteria</taxon>
        <taxon>Bacillati</taxon>
        <taxon>Cyanobacteriota</taxon>
        <taxon>Cyanophyceae</taxon>
        <taxon>Synechococcales</taxon>
        <taxon>Synechococcaceae</taxon>
        <taxon>Synechococcus</taxon>
    </lineage>
</organism>
<keyword id="KW-0240">DNA-directed RNA polymerase</keyword>
<keyword id="KW-0548">Nucleotidyltransferase</keyword>
<keyword id="KW-0804">Transcription</keyword>
<keyword id="KW-0808">Transferase</keyword>